<comment type="function">
    <text evidence="1">Catalyzes the transfer of a dimethylallyl group onto the adenine at position 37 in tRNAs that read codons beginning with uridine, leading to the formation of N6-(dimethylallyl)adenosine (i(6)A).</text>
</comment>
<comment type="catalytic activity">
    <reaction evidence="1">
        <text>adenosine(37) in tRNA + dimethylallyl diphosphate = N(6)-dimethylallyladenosine(37) in tRNA + diphosphate</text>
        <dbReference type="Rhea" id="RHEA:26482"/>
        <dbReference type="Rhea" id="RHEA-COMP:10162"/>
        <dbReference type="Rhea" id="RHEA-COMP:10375"/>
        <dbReference type="ChEBI" id="CHEBI:33019"/>
        <dbReference type="ChEBI" id="CHEBI:57623"/>
        <dbReference type="ChEBI" id="CHEBI:74411"/>
        <dbReference type="ChEBI" id="CHEBI:74415"/>
        <dbReference type="EC" id="2.5.1.75"/>
    </reaction>
</comment>
<comment type="cofactor">
    <cofactor evidence="1">
        <name>Mg(2+)</name>
        <dbReference type="ChEBI" id="CHEBI:18420"/>
    </cofactor>
</comment>
<comment type="subunit">
    <text evidence="1">Monomer.</text>
</comment>
<comment type="similarity">
    <text evidence="1">Belongs to the IPP transferase family.</text>
</comment>
<reference key="1">
    <citation type="journal article" date="2009" name="J. Bacteriol.">
        <title>The genome of Thermosipho africanus TCF52B: lateral genetic connections to the Firmicutes and Archaea.</title>
        <authorList>
            <person name="Nesboe C.L."/>
            <person name="Bapteste E."/>
            <person name="Curtis B."/>
            <person name="Dahle H."/>
            <person name="Lopez P."/>
            <person name="Macleod D."/>
            <person name="Dlutek M."/>
            <person name="Bowman S."/>
            <person name="Zhaxybayeva O."/>
            <person name="Birkeland N.-K."/>
            <person name="Doolittle W.F."/>
        </authorList>
    </citation>
    <scope>NUCLEOTIDE SEQUENCE [LARGE SCALE GENOMIC DNA]</scope>
    <source>
        <strain>TCF52B</strain>
    </source>
</reference>
<keyword id="KW-0067">ATP-binding</keyword>
<keyword id="KW-0460">Magnesium</keyword>
<keyword id="KW-0547">Nucleotide-binding</keyword>
<keyword id="KW-1185">Reference proteome</keyword>
<keyword id="KW-0808">Transferase</keyword>
<keyword id="KW-0819">tRNA processing</keyword>
<name>MIAA_THEAB</name>
<sequence length="301" mass="35348">MKYTIISGPTAVGKTDIVLEIASQINANIISVDSRQIYKLMDIGTAKPSKEEKSKVTHYLIDHIYPDEYYNAFLFRQDALKIRDKLVNEGIVPLFVGGTGLYIDSLVRGFFEGVPKDEKLRKELSEMEKNEPGILRSMLEKYDPQAAQKIHPSDIKRTIRALEVYFKTGKKISQLQTQSEYSKDYKILVLDRYRDELYERINLRVDKMIKEGLVDEVKSLLEKYPKDLNAFQTIGYKEIIRYLENTYDLNTAVHLIKKNTRHYARRQIIWLRRYKQAKWINLSEISRKKAIEEIKKFILEV</sequence>
<feature type="chain" id="PRO_1000191871" description="tRNA dimethylallyltransferase">
    <location>
        <begin position="1"/>
        <end position="301"/>
    </location>
</feature>
<feature type="region of interest" description="Interaction with substrate tRNA" evidence="1">
    <location>
        <begin position="33"/>
        <end position="36"/>
    </location>
</feature>
<feature type="binding site" evidence="1">
    <location>
        <begin position="8"/>
        <end position="15"/>
    </location>
    <ligand>
        <name>ATP</name>
        <dbReference type="ChEBI" id="CHEBI:30616"/>
    </ligand>
</feature>
<feature type="binding site" evidence="1">
    <location>
        <begin position="10"/>
        <end position="15"/>
    </location>
    <ligand>
        <name>substrate</name>
    </ligand>
</feature>
<feature type="site" description="Interaction with substrate tRNA" evidence="1">
    <location>
        <position position="99"/>
    </location>
</feature>
<feature type="site" description="Interaction with substrate tRNA" evidence="1">
    <location>
        <position position="121"/>
    </location>
</feature>
<evidence type="ECO:0000255" key="1">
    <source>
        <dbReference type="HAMAP-Rule" id="MF_00185"/>
    </source>
</evidence>
<gene>
    <name evidence="1" type="primary">miaA</name>
    <name type="ordered locus">THA_1714</name>
</gene>
<dbReference type="EC" id="2.5.1.75" evidence="1"/>
<dbReference type="EMBL" id="CP001185">
    <property type="protein sequence ID" value="ACJ76150.1"/>
    <property type="molecule type" value="Genomic_DNA"/>
</dbReference>
<dbReference type="RefSeq" id="WP_004102573.1">
    <property type="nucleotide sequence ID" value="NC_011653.1"/>
</dbReference>
<dbReference type="SMR" id="B7IDS3"/>
<dbReference type="STRING" id="484019.THA_1714"/>
<dbReference type="KEGG" id="taf:THA_1714"/>
<dbReference type="eggNOG" id="COG0324">
    <property type="taxonomic scope" value="Bacteria"/>
</dbReference>
<dbReference type="HOGENOM" id="CLU_032616_0_1_0"/>
<dbReference type="OrthoDB" id="9776390at2"/>
<dbReference type="Proteomes" id="UP000002453">
    <property type="component" value="Chromosome"/>
</dbReference>
<dbReference type="GO" id="GO:0005524">
    <property type="term" value="F:ATP binding"/>
    <property type="evidence" value="ECO:0007669"/>
    <property type="project" value="UniProtKB-UniRule"/>
</dbReference>
<dbReference type="GO" id="GO:0052381">
    <property type="term" value="F:tRNA dimethylallyltransferase activity"/>
    <property type="evidence" value="ECO:0007669"/>
    <property type="project" value="UniProtKB-UniRule"/>
</dbReference>
<dbReference type="GO" id="GO:0006400">
    <property type="term" value="P:tRNA modification"/>
    <property type="evidence" value="ECO:0007669"/>
    <property type="project" value="TreeGrafter"/>
</dbReference>
<dbReference type="FunFam" id="1.10.20.140:FF:000001">
    <property type="entry name" value="tRNA dimethylallyltransferase"/>
    <property type="match status" value="1"/>
</dbReference>
<dbReference type="Gene3D" id="1.10.20.140">
    <property type="match status" value="1"/>
</dbReference>
<dbReference type="Gene3D" id="3.40.50.300">
    <property type="entry name" value="P-loop containing nucleotide triphosphate hydrolases"/>
    <property type="match status" value="1"/>
</dbReference>
<dbReference type="HAMAP" id="MF_00185">
    <property type="entry name" value="IPP_trans"/>
    <property type="match status" value="1"/>
</dbReference>
<dbReference type="InterPro" id="IPR039657">
    <property type="entry name" value="Dimethylallyltransferase"/>
</dbReference>
<dbReference type="InterPro" id="IPR018022">
    <property type="entry name" value="IPT"/>
</dbReference>
<dbReference type="InterPro" id="IPR027417">
    <property type="entry name" value="P-loop_NTPase"/>
</dbReference>
<dbReference type="NCBIfam" id="TIGR00174">
    <property type="entry name" value="miaA"/>
    <property type="match status" value="1"/>
</dbReference>
<dbReference type="PANTHER" id="PTHR11088">
    <property type="entry name" value="TRNA DIMETHYLALLYLTRANSFERASE"/>
    <property type="match status" value="1"/>
</dbReference>
<dbReference type="PANTHER" id="PTHR11088:SF60">
    <property type="entry name" value="TRNA DIMETHYLALLYLTRANSFERASE"/>
    <property type="match status" value="1"/>
</dbReference>
<dbReference type="Pfam" id="PF01715">
    <property type="entry name" value="IPPT"/>
    <property type="match status" value="1"/>
</dbReference>
<dbReference type="SUPFAM" id="SSF52540">
    <property type="entry name" value="P-loop containing nucleoside triphosphate hydrolases"/>
    <property type="match status" value="2"/>
</dbReference>
<protein>
    <recommendedName>
        <fullName evidence="1">tRNA dimethylallyltransferase</fullName>
        <ecNumber evidence="1">2.5.1.75</ecNumber>
    </recommendedName>
    <alternativeName>
        <fullName evidence="1">Dimethylallyl diphosphate:tRNA dimethylallyltransferase</fullName>
        <shortName evidence="1">DMAPP:tRNA dimethylallyltransferase</shortName>
        <shortName evidence="1">DMATase</shortName>
    </alternativeName>
    <alternativeName>
        <fullName evidence="1">Isopentenyl-diphosphate:tRNA isopentenyltransferase</fullName>
        <shortName evidence="1">IPP transferase</shortName>
        <shortName evidence="1">IPPT</shortName>
        <shortName evidence="1">IPTase</shortName>
    </alternativeName>
</protein>
<organism>
    <name type="scientific">Thermosipho africanus (strain TCF52B)</name>
    <dbReference type="NCBI Taxonomy" id="484019"/>
    <lineage>
        <taxon>Bacteria</taxon>
        <taxon>Thermotogati</taxon>
        <taxon>Thermotogota</taxon>
        <taxon>Thermotogae</taxon>
        <taxon>Thermotogales</taxon>
        <taxon>Fervidobacteriaceae</taxon>
        <taxon>Thermosipho</taxon>
    </lineage>
</organism>
<accession>B7IDS3</accession>
<proteinExistence type="inferred from homology"/>